<sequence length="708" mass="80249">MSFCLTELYLWSLKNNLHIGDEDVGVHQYHEKKEAALHPDYGFLEEKQQWMESRGFPWILKNKRPEKLRDNLTELEELMQSSECVLSKWKNKYVCQLLFGSGVLVSISLSGPQLEKVVIDRSLVGKLISNPISDAIFTDSFIILSFLKENKLCLIQFTKKINSPDINRQLDKLSLLDLKISYTDIPGPKGRHLVRHLAINSMQDLALCWWPVPVDDVKPWSPVSSEKDRANLVLLSNSSCKLEVLSYIRTEGDLLNACFSINQPYQICTVEHSLNSNKEPMADRFIYECVRNKIQCVSVTRVPLRSRVISCAVNTSEDKLVLGCEDSSLILYESDCKVTLLAQADLLPDLIRWHPNGTIFVVASSQGELQIFDMALSPIRAQILAEEIEPNSTIQVCKQFNVSSTLVEMHWAAPHTLLQNMDMTDIYNLLYLRFDGGPIGVLQLKLGAICRGQLGAMEIISQYIRHDEVDEAVGLLSSMNWNTMGHQCFTSMTAIVNHLLRQRLTPDREAQLEASLGTFYSPTRPLLDTIVLQYRDPISRYARRFFHHLLRYQRFEKAFLLAVDIGARDLFMDIHYLALDKGELALAKVARKKAEEIDAESINSGVEPLLPTDTLADVNEAFVDLSLIPQVEDRILGSFPSTDLGAHNSIQRNANRQLVHIENEIGIEVYAESLDKSLPWNQECFEEDFAEENPEGIGSLKVVHFGLV</sequence>
<evidence type="ECO:0000250" key="1">
    <source>
        <dbReference type="UniProtKB" id="Q8C456"/>
    </source>
</evidence>
<evidence type="ECO:0000269" key="2">
    <source>
    </source>
</evidence>
<evidence type="ECO:0000269" key="3">
    <source>
    </source>
</evidence>
<evidence type="ECO:0000305" key="4"/>
<evidence type="ECO:0000305" key="5">
    <source>
    </source>
</evidence>
<proteinExistence type="evidence at protein level"/>
<accession>Q32NR9</accession>
<reference key="1">
    <citation type="submission" date="2005-11" db="EMBL/GenBank/DDBJ databases">
        <authorList>
            <consortium name="NIH - Xenopus Gene Collection (XGC) project"/>
        </authorList>
    </citation>
    <scope>NUCLEOTIDE SEQUENCE [LARGE SCALE MRNA]</scope>
    <source>
        <tissue>Testis</tissue>
    </source>
</reference>
<reference key="2">
    <citation type="journal article" date="2010" name="Science">
        <title>Planar cell polarity acts through septins to control collective cell movement and ciliogenesis.</title>
        <authorList>
            <person name="Kim S.K."/>
            <person name="Shindo A."/>
            <person name="Park T.J."/>
            <person name="Oh E.C."/>
            <person name="Ghosh S."/>
            <person name="Gray R.S."/>
            <person name="Lewis R.A."/>
            <person name="Johnson C.A."/>
            <person name="Attie-Bittach T."/>
            <person name="Katsanis N."/>
            <person name="Wallingford J.B."/>
        </authorList>
    </citation>
    <scope>FUNCTION</scope>
    <scope>SUBCELLULAR LOCATION</scope>
    <scope>DEVELOPMENTAL STAGE</scope>
    <scope>INTERACTION WITH SEPT2-A</scope>
</reference>
<reference key="3">
    <citation type="journal article" date="2016" name="Nat. Genet.">
        <title>The ciliopathy-associated CPLANE proteins direct basal body recruitment of intraflagellar transport machinery.</title>
        <authorList>
            <person name="Toriyama M."/>
            <person name="Lee C."/>
            <person name="Taylor S.P."/>
            <person name="Duran I."/>
            <person name="Cohn D.H."/>
            <person name="Bruel A.L."/>
            <person name="Tabler J.M."/>
            <person name="Drew K."/>
            <person name="Kelly M.R."/>
            <person name="Kim S."/>
            <person name="Park T.J."/>
            <person name="Braun D.A."/>
            <person name="Pierquin G."/>
            <person name="Biver A."/>
            <person name="Wagner K."/>
            <person name="Malfroot A."/>
            <person name="Panigrahi I."/>
            <person name="Franco B."/>
            <person name="Al-Lami H.A."/>
            <person name="Yeung Y."/>
            <person name="Choi Y.J."/>
            <person name="Duffourd Y."/>
            <person name="Faivre L."/>
            <person name="Riviere J.B."/>
            <person name="Chen J."/>
            <person name="Liu K.J."/>
            <person name="Marcotte E.M."/>
            <person name="Hildebrandt F."/>
            <person name="Thauvin-Robinet C."/>
            <person name="Krakow D."/>
            <person name="Jackson P.K."/>
            <person name="Wallingford J.B."/>
        </authorList>
    </citation>
    <scope>FUNCTION</scope>
    <scope>SUBCELLULAR LOCATION</scope>
</reference>
<protein>
    <recommendedName>
        <fullName>WD repeat-containing and planar cell polarity effector protein fritz homolog</fullName>
    </recommendedName>
    <alternativeName>
        <fullName>WD repeat-containing and planar cell polarity effector protein</fullName>
    </alternativeName>
</protein>
<feature type="chain" id="PRO_0000406197" description="WD repeat-containing and planar cell polarity effector protein fritz homolog">
    <location>
        <begin position="1"/>
        <end position="708"/>
    </location>
</feature>
<feature type="repeat" description="WD 1">
    <location>
        <begin position="303"/>
        <end position="342"/>
    </location>
</feature>
<feature type="repeat" description="WD 2">
    <location>
        <begin position="343"/>
        <end position="382"/>
    </location>
</feature>
<name>FRITZ_XENLA</name>
<comment type="function">
    <text evidence="2 3">Probable effector of the planar cell polarity signaling pathway which regulates the septin cytoskeleton in both ciliogenesis and collective cell movements including covergent extension during gastrulation. Controls cell shape but not polarization during convergent extension (PubMed:20671153). Proposed to function as core component of the CPLANE (ciliogenesis and planar polarity effectors) complex involved in the recruitment of peripheral IFT-A proteins to basal bodies.</text>
</comment>
<comment type="subunit">
    <text evidence="1 2">Interacts with sept2-a (PubMed:20671153). Interacts with intu and fuz; fuz, intu and wdpcp probably form the core CPLANE (ciliogenesis and planar polarity effectors) complex (By similarity).</text>
</comment>
<comment type="subcellular location">
    <subcellularLocation>
        <location evidence="2">Cell membrane</location>
    </subcellularLocation>
    <subcellularLocation>
        <location evidence="2">Cytoplasm</location>
        <location evidence="2">Cytoskeleton</location>
        <location evidence="2">Cilium axoneme</location>
    </subcellularLocation>
    <subcellularLocation>
        <location evidence="5">Cytoplasm</location>
        <location evidence="5">Cytoskeleton</location>
        <location evidence="5">Cilium basal body</location>
    </subcellularLocation>
    <text>Also found adjacent to the cilium basal body.</text>
</comment>
<comment type="developmental stage">
    <text evidence="2">Expressed in the dorsal mesoderm of gastrulating embryos. Expressed in the midline and in a punctate pattern in the ciliates epidermis of stage 18 embryos. Expressed in otic vesicle, nephrostome and ventral neural tube of stage 34 embryos.</text>
</comment>
<comment type="similarity">
    <text evidence="4">Belongs to the WD repeat fritz family.</text>
</comment>
<keyword id="KW-1003">Cell membrane</keyword>
<keyword id="KW-0966">Cell projection</keyword>
<keyword id="KW-0969">Cilium</keyword>
<keyword id="KW-0970">Cilium biogenesis/degradation</keyword>
<keyword id="KW-0963">Cytoplasm</keyword>
<keyword id="KW-0206">Cytoskeleton</keyword>
<keyword id="KW-0472">Membrane</keyword>
<keyword id="KW-1185">Reference proteome</keyword>
<keyword id="KW-0677">Repeat</keyword>
<keyword id="KW-0853">WD repeat</keyword>
<gene>
    <name type="primary">wdpcp</name>
    <name type="synonym">fritz</name>
</gene>
<dbReference type="EMBL" id="BC108509">
    <property type="protein sequence ID" value="AAI08510.1"/>
    <property type="molecule type" value="mRNA"/>
</dbReference>
<dbReference type="RefSeq" id="NP_001089828.1">
    <property type="nucleotide sequence ID" value="NM_001096359.1"/>
</dbReference>
<dbReference type="SMR" id="Q32NR9"/>
<dbReference type="BioGRID" id="592675">
    <property type="interactions" value="1"/>
</dbReference>
<dbReference type="IntAct" id="Q32NR9">
    <property type="interactions" value="1"/>
</dbReference>
<dbReference type="GeneID" id="734894"/>
<dbReference type="KEGG" id="xla:734894"/>
<dbReference type="AGR" id="Xenbase:XB-GENE-5820884"/>
<dbReference type="CTD" id="734894"/>
<dbReference type="Xenbase" id="XB-GENE-5820884">
    <property type="gene designation" value="wdpcp.L"/>
</dbReference>
<dbReference type="OMA" id="NSMNWNT"/>
<dbReference type="OrthoDB" id="10013020at2759"/>
<dbReference type="Proteomes" id="UP000186698">
    <property type="component" value="Chromosome 5L"/>
</dbReference>
<dbReference type="Bgee" id="734894">
    <property type="expression patterns" value="Expressed in testis and 18 other cell types or tissues"/>
</dbReference>
<dbReference type="GO" id="GO:0097541">
    <property type="term" value="C:axonemal basal plate"/>
    <property type="evidence" value="ECO:0000318"/>
    <property type="project" value="GO_Central"/>
</dbReference>
<dbReference type="GO" id="GO:0005930">
    <property type="term" value="C:axoneme"/>
    <property type="evidence" value="ECO:0000314"/>
    <property type="project" value="UniProtKB"/>
</dbReference>
<dbReference type="GO" id="GO:0005886">
    <property type="term" value="C:plasma membrane"/>
    <property type="evidence" value="ECO:0007669"/>
    <property type="project" value="UniProtKB-SubCell"/>
</dbReference>
<dbReference type="GO" id="GO:0060271">
    <property type="term" value="P:cilium assembly"/>
    <property type="evidence" value="ECO:0000315"/>
    <property type="project" value="UniProtKB"/>
</dbReference>
<dbReference type="GO" id="GO:0044782">
    <property type="term" value="P:cilium organization"/>
    <property type="evidence" value="ECO:0000318"/>
    <property type="project" value="GO_Central"/>
</dbReference>
<dbReference type="GO" id="GO:0045184">
    <property type="term" value="P:establishment of protein localization"/>
    <property type="evidence" value="ECO:0000318"/>
    <property type="project" value="GO_Central"/>
</dbReference>
<dbReference type="GO" id="GO:0060031">
    <property type="term" value="P:mediolateral intercalation"/>
    <property type="evidence" value="ECO:0000315"/>
    <property type="project" value="UniProtKB"/>
</dbReference>
<dbReference type="GO" id="GO:0007399">
    <property type="term" value="P:nervous system development"/>
    <property type="evidence" value="ECO:0000318"/>
    <property type="project" value="GO_Central"/>
</dbReference>
<dbReference type="GO" id="GO:0016476">
    <property type="term" value="P:regulation of embryonic cell shape"/>
    <property type="evidence" value="ECO:0000315"/>
    <property type="project" value="UniProtKB"/>
</dbReference>
<dbReference type="GO" id="GO:0032880">
    <property type="term" value="P:regulation of protein localization"/>
    <property type="evidence" value="ECO:0000315"/>
    <property type="project" value="UniProtKB"/>
</dbReference>
<dbReference type="GO" id="GO:0032185">
    <property type="term" value="P:septin cytoskeleton organization"/>
    <property type="evidence" value="ECO:0000315"/>
    <property type="project" value="UniProtKB"/>
</dbReference>
<dbReference type="InterPro" id="IPR024511">
    <property type="entry name" value="Frtz"/>
</dbReference>
<dbReference type="InterPro" id="IPR036322">
    <property type="entry name" value="WD40_repeat_dom_sf"/>
</dbReference>
<dbReference type="PANTHER" id="PTHR13667">
    <property type="entry name" value="HOMOLOC-13"/>
    <property type="match status" value="1"/>
</dbReference>
<dbReference type="PANTHER" id="PTHR13667:SF5">
    <property type="entry name" value="WD REPEAT-CONTAINING AND PLANAR CELL POLARITY EFFECTOR PROTEIN FRITZ HOMOLOG"/>
    <property type="match status" value="1"/>
</dbReference>
<dbReference type="Pfam" id="PF11768">
    <property type="entry name" value="Frtz"/>
    <property type="match status" value="1"/>
</dbReference>
<dbReference type="SUPFAM" id="SSF50978">
    <property type="entry name" value="WD40 repeat-like"/>
    <property type="match status" value="1"/>
</dbReference>
<organism>
    <name type="scientific">Xenopus laevis</name>
    <name type="common">African clawed frog</name>
    <dbReference type="NCBI Taxonomy" id="8355"/>
    <lineage>
        <taxon>Eukaryota</taxon>
        <taxon>Metazoa</taxon>
        <taxon>Chordata</taxon>
        <taxon>Craniata</taxon>
        <taxon>Vertebrata</taxon>
        <taxon>Euteleostomi</taxon>
        <taxon>Amphibia</taxon>
        <taxon>Batrachia</taxon>
        <taxon>Anura</taxon>
        <taxon>Pipoidea</taxon>
        <taxon>Pipidae</taxon>
        <taxon>Xenopodinae</taxon>
        <taxon>Xenopus</taxon>
        <taxon>Xenopus</taxon>
    </lineage>
</organism>